<reference key="1">
    <citation type="submission" date="2006-06" db="EMBL/GenBank/DDBJ databases">
        <title>Complete sequence of chromosome of Mycobacterium sp. MCS.</title>
        <authorList>
            <consortium name="US DOE Joint Genome Institute"/>
            <person name="Copeland A."/>
            <person name="Lucas S."/>
            <person name="Lapidus A."/>
            <person name="Barry K."/>
            <person name="Detter J.C."/>
            <person name="Glavina del Rio T."/>
            <person name="Hammon N."/>
            <person name="Israni S."/>
            <person name="Dalin E."/>
            <person name="Tice H."/>
            <person name="Pitluck S."/>
            <person name="Martinez M."/>
            <person name="Schmutz J."/>
            <person name="Larimer F."/>
            <person name="Land M."/>
            <person name="Hauser L."/>
            <person name="Kyrpides N."/>
            <person name="Kim E."/>
            <person name="Miller C.D."/>
            <person name="Hughes J.E."/>
            <person name="Anderson A.J."/>
            <person name="Sims R.C."/>
            <person name="Richardson P."/>
        </authorList>
    </citation>
    <scope>NUCLEOTIDE SEQUENCE [LARGE SCALE GENOMIC DNA]</scope>
    <source>
        <strain>MCS</strain>
    </source>
</reference>
<proteinExistence type="inferred from homology"/>
<gene>
    <name evidence="1" type="primary">tsaD</name>
    <name type="synonym">gcp</name>
    <name type="ordered locus">Mmcs_1151</name>
</gene>
<evidence type="ECO:0000255" key="1">
    <source>
        <dbReference type="HAMAP-Rule" id="MF_01445"/>
    </source>
</evidence>
<dbReference type="EC" id="2.3.1.234" evidence="1"/>
<dbReference type="EMBL" id="CP000384">
    <property type="protein sequence ID" value="ABG07264.1"/>
    <property type="molecule type" value="Genomic_DNA"/>
</dbReference>
<dbReference type="SMR" id="Q1BCX0"/>
<dbReference type="KEGG" id="mmc:Mmcs_1151"/>
<dbReference type="HOGENOM" id="CLU_023208_0_2_11"/>
<dbReference type="BioCyc" id="MSP164756:G1G6O-1177-MONOMER"/>
<dbReference type="GO" id="GO:0005737">
    <property type="term" value="C:cytoplasm"/>
    <property type="evidence" value="ECO:0007669"/>
    <property type="project" value="UniProtKB-SubCell"/>
</dbReference>
<dbReference type="GO" id="GO:0005506">
    <property type="term" value="F:iron ion binding"/>
    <property type="evidence" value="ECO:0007669"/>
    <property type="project" value="UniProtKB-UniRule"/>
</dbReference>
<dbReference type="GO" id="GO:0061711">
    <property type="term" value="F:N(6)-L-threonylcarbamoyladenine synthase activity"/>
    <property type="evidence" value="ECO:0007669"/>
    <property type="project" value="UniProtKB-EC"/>
</dbReference>
<dbReference type="GO" id="GO:0002949">
    <property type="term" value="P:tRNA threonylcarbamoyladenosine modification"/>
    <property type="evidence" value="ECO:0007669"/>
    <property type="project" value="UniProtKB-UniRule"/>
</dbReference>
<dbReference type="CDD" id="cd24133">
    <property type="entry name" value="ASKHA_NBD_TsaD_bac"/>
    <property type="match status" value="1"/>
</dbReference>
<dbReference type="FunFam" id="3.30.420.40:FF:000012">
    <property type="entry name" value="tRNA N6-adenosine threonylcarbamoyltransferase"/>
    <property type="match status" value="1"/>
</dbReference>
<dbReference type="FunFam" id="3.30.420.40:FF:000040">
    <property type="entry name" value="tRNA N6-adenosine threonylcarbamoyltransferase"/>
    <property type="match status" value="1"/>
</dbReference>
<dbReference type="Gene3D" id="3.30.420.40">
    <property type="match status" value="2"/>
</dbReference>
<dbReference type="HAMAP" id="MF_01445">
    <property type="entry name" value="TsaD"/>
    <property type="match status" value="1"/>
</dbReference>
<dbReference type="InterPro" id="IPR043129">
    <property type="entry name" value="ATPase_NBD"/>
</dbReference>
<dbReference type="InterPro" id="IPR000905">
    <property type="entry name" value="Gcp-like_dom"/>
</dbReference>
<dbReference type="InterPro" id="IPR017861">
    <property type="entry name" value="KAE1/TsaD"/>
</dbReference>
<dbReference type="InterPro" id="IPR017860">
    <property type="entry name" value="Peptidase_M22_CS"/>
</dbReference>
<dbReference type="InterPro" id="IPR022450">
    <property type="entry name" value="TsaD"/>
</dbReference>
<dbReference type="NCBIfam" id="TIGR00329">
    <property type="entry name" value="gcp_kae1"/>
    <property type="match status" value="1"/>
</dbReference>
<dbReference type="NCBIfam" id="TIGR03723">
    <property type="entry name" value="T6A_TsaD_YgjD"/>
    <property type="match status" value="1"/>
</dbReference>
<dbReference type="PANTHER" id="PTHR11735">
    <property type="entry name" value="TRNA N6-ADENOSINE THREONYLCARBAMOYLTRANSFERASE"/>
    <property type="match status" value="1"/>
</dbReference>
<dbReference type="PANTHER" id="PTHR11735:SF6">
    <property type="entry name" value="TRNA N6-ADENOSINE THREONYLCARBAMOYLTRANSFERASE, MITOCHONDRIAL"/>
    <property type="match status" value="1"/>
</dbReference>
<dbReference type="Pfam" id="PF00814">
    <property type="entry name" value="TsaD"/>
    <property type="match status" value="1"/>
</dbReference>
<dbReference type="PRINTS" id="PR00789">
    <property type="entry name" value="OSIALOPTASE"/>
</dbReference>
<dbReference type="SUPFAM" id="SSF53067">
    <property type="entry name" value="Actin-like ATPase domain"/>
    <property type="match status" value="1"/>
</dbReference>
<dbReference type="PROSITE" id="PS01016">
    <property type="entry name" value="GLYCOPROTEASE"/>
    <property type="match status" value="1"/>
</dbReference>
<organism>
    <name type="scientific">Mycobacterium sp. (strain MCS)</name>
    <dbReference type="NCBI Taxonomy" id="164756"/>
    <lineage>
        <taxon>Bacteria</taxon>
        <taxon>Bacillati</taxon>
        <taxon>Actinomycetota</taxon>
        <taxon>Actinomycetes</taxon>
        <taxon>Mycobacteriales</taxon>
        <taxon>Mycobacteriaceae</taxon>
        <taxon>Mycobacterium</taxon>
    </lineage>
</organism>
<sequence length="340" mass="34894">MIILAIESSCDETGVGIAELSEDGTVTLLADEVASSVDEHARFGGVVPEIASRAHLEALGPTMRRALDTAGVGRPDVVAATIGPGLAGALLVGVAAAKAYSAAWQVPFYGVNHLGGHLAADVYDHGPLPESVGLLVSGGHTHLLHVRSLGEPIIELGSTVDDAAGEAYDKVARLLGLGYPGGKVLDDLARQGDREAIVFPRGMTGPRDDPFAFSFSGLKTAVARYVESHPEASQADVAAGFQEAVADVLTRKAVRAAETLGVSTLLIAGGVAANSRLRELAEQRCAESGLTLRIPRPRLCTDNGAMIASFAAHLIAAGAPPSPLEAASDPGLPVVRSQVA</sequence>
<comment type="function">
    <text evidence="1">Required for the formation of a threonylcarbamoyl group on adenosine at position 37 (t(6)A37) in tRNAs that read codons beginning with adenine. Is involved in the transfer of the threonylcarbamoyl moiety of threonylcarbamoyl-AMP (TC-AMP) to the N6 group of A37, together with TsaE and TsaB. TsaD likely plays a direct catalytic role in this reaction.</text>
</comment>
<comment type="catalytic activity">
    <reaction evidence="1">
        <text>L-threonylcarbamoyladenylate + adenosine(37) in tRNA = N(6)-L-threonylcarbamoyladenosine(37) in tRNA + AMP + H(+)</text>
        <dbReference type="Rhea" id="RHEA:37059"/>
        <dbReference type="Rhea" id="RHEA-COMP:10162"/>
        <dbReference type="Rhea" id="RHEA-COMP:10163"/>
        <dbReference type="ChEBI" id="CHEBI:15378"/>
        <dbReference type="ChEBI" id="CHEBI:73682"/>
        <dbReference type="ChEBI" id="CHEBI:74411"/>
        <dbReference type="ChEBI" id="CHEBI:74418"/>
        <dbReference type="ChEBI" id="CHEBI:456215"/>
        <dbReference type="EC" id="2.3.1.234"/>
    </reaction>
</comment>
<comment type="cofactor">
    <cofactor evidence="1">
        <name>Fe(2+)</name>
        <dbReference type="ChEBI" id="CHEBI:29033"/>
    </cofactor>
    <text evidence="1">Binds 1 Fe(2+) ion per subunit.</text>
</comment>
<comment type="subcellular location">
    <subcellularLocation>
        <location evidence="1">Cytoplasm</location>
    </subcellularLocation>
</comment>
<comment type="similarity">
    <text evidence="1">Belongs to the KAE1 / TsaD family.</text>
</comment>
<accession>Q1BCX0</accession>
<feature type="chain" id="PRO_0000303434" description="tRNA N6-adenosine threonylcarbamoyltransferase">
    <location>
        <begin position="1"/>
        <end position="340"/>
    </location>
</feature>
<feature type="binding site" evidence="1">
    <location>
        <position position="113"/>
    </location>
    <ligand>
        <name>Fe cation</name>
        <dbReference type="ChEBI" id="CHEBI:24875"/>
    </ligand>
</feature>
<feature type="binding site" evidence="1">
    <location>
        <position position="117"/>
    </location>
    <ligand>
        <name>Fe cation</name>
        <dbReference type="ChEBI" id="CHEBI:24875"/>
    </ligand>
</feature>
<feature type="binding site" evidence="1">
    <location>
        <begin position="135"/>
        <end position="139"/>
    </location>
    <ligand>
        <name>substrate</name>
    </ligand>
</feature>
<feature type="binding site" evidence="1">
    <location>
        <position position="169"/>
    </location>
    <ligand>
        <name>substrate</name>
    </ligand>
</feature>
<feature type="binding site" evidence="1">
    <location>
        <position position="182"/>
    </location>
    <ligand>
        <name>substrate</name>
    </ligand>
</feature>
<feature type="binding site" evidence="1">
    <location>
        <position position="186"/>
    </location>
    <ligand>
        <name>substrate</name>
    </ligand>
</feature>
<feature type="binding site" evidence="1">
    <location>
        <position position="274"/>
    </location>
    <ligand>
        <name>substrate</name>
    </ligand>
</feature>
<feature type="binding site" evidence="1">
    <location>
        <position position="302"/>
    </location>
    <ligand>
        <name>Fe cation</name>
        <dbReference type="ChEBI" id="CHEBI:24875"/>
    </ligand>
</feature>
<keyword id="KW-0012">Acyltransferase</keyword>
<keyword id="KW-0963">Cytoplasm</keyword>
<keyword id="KW-0408">Iron</keyword>
<keyword id="KW-0479">Metal-binding</keyword>
<keyword id="KW-0808">Transferase</keyword>
<keyword id="KW-0819">tRNA processing</keyword>
<name>TSAD_MYCSS</name>
<protein>
    <recommendedName>
        <fullName evidence="1">tRNA N6-adenosine threonylcarbamoyltransferase</fullName>
        <ecNumber evidence="1">2.3.1.234</ecNumber>
    </recommendedName>
    <alternativeName>
        <fullName evidence="1">N6-L-threonylcarbamoyladenine synthase</fullName>
        <shortName evidence="1">t(6)A synthase</shortName>
    </alternativeName>
    <alternativeName>
        <fullName evidence="1">t(6)A37 threonylcarbamoyladenosine biosynthesis protein TsaD</fullName>
    </alternativeName>
    <alternativeName>
        <fullName evidence="1">tRNA threonylcarbamoyladenosine biosynthesis protein TsaD</fullName>
    </alternativeName>
</protein>